<protein>
    <recommendedName>
        <fullName>Ribonuclease MRP protein subunit rmp1</fullName>
    </recommendedName>
    <alternativeName>
        <fullName>RNA-processing protein rmp1</fullName>
    </alternativeName>
</protein>
<accession>Q9UT91</accession>
<reference key="1">
    <citation type="journal article" date="2002" name="Nature">
        <title>The genome sequence of Schizosaccharomyces pombe.</title>
        <authorList>
            <person name="Wood V."/>
            <person name="Gwilliam R."/>
            <person name="Rajandream M.A."/>
            <person name="Lyne M.H."/>
            <person name="Lyne R."/>
            <person name="Stewart A."/>
            <person name="Sgouros J.G."/>
            <person name="Peat N."/>
            <person name="Hayles J."/>
            <person name="Baker S.G."/>
            <person name="Basham D."/>
            <person name="Bowman S."/>
            <person name="Brooks K."/>
            <person name="Brown D."/>
            <person name="Brown S."/>
            <person name="Chillingworth T."/>
            <person name="Churcher C.M."/>
            <person name="Collins M."/>
            <person name="Connor R."/>
            <person name="Cronin A."/>
            <person name="Davis P."/>
            <person name="Feltwell T."/>
            <person name="Fraser A."/>
            <person name="Gentles S."/>
            <person name="Goble A."/>
            <person name="Hamlin N."/>
            <person name="Harris D.E."/>
            <person name="Hidalgo J."/>
            <person name="Hodgson G."/>
            <person name="Holroyd S."/>
            <person name="Hornsby T."/>
            <person name="Howarth S."/>
            <person name="Huckle E.J."/>
            <person name="Hunt S."/>
            <person name="Jagels K."/>
            <person name="James K.D."/>
            <person name="Jones L."/>
            <person name="Jones M."/>
            <person name="Leather S."/>
            <person name="McDonald S."/>
            <person name="McLean J."/>
            <person name="Mooney P."/>
            <person name="Moule S."/>
            <person name="Mungall K.L."/>
            <person name="Murphy L.D."/>
            <person name="Niblett D."/>
            <person name="Odell C."/>
            <person name="Oliver K."/>
            <person name="O'Neil S."/>
            <person name="Pearson D."/>
            <person name="Quail M.A."/>
            <person name="Rabbinowitsch E."/>
            <person name="Rutherford K.M."/>
            <person name="Rutter S."/>
            <person name="Saunders D."/>
            <person name="Seeger K."/>
            <person name="Sharp S."/>
            <person name="Skelton J."/>
            <person name="Simmonds M.N."/>
            <person name="Squares R."/>
            <person name="Squares S."/>
            <person name="Stevens K."/>
            <person name="Taylor K."/>
            <person name="Taylor R.G."/>
            <person name="Tivey A."/>
            <person name="Walsh S.V."/>
            <person name="Warren T."/>
            <person name="Whitehead S."/>
            <person name="Woodward J.R."/>
            <person name="Volckaert G."/>
            <person name="Aert R."/>
            <person name="Robben J."/>
            <person name="Grymonprez B."/>
            <person name="Weltjens I."/>
            <person name="Vanstreels E."/>
            <person name="Rieger M."/>
            <person name="Schaefer M."/>
            <person name="Mueller-Auer S."/>
            <person name="Gabel C."/>
            <person name="Fuchs M."/>
            <person name="Duesterhoeft A."/>
            <person name="Fritzc C."/>
            <person name="Holzer E."/>
            <person name="Moestl D."/>
            <person name="Hilbert H."/>
            <person name="Borzym K."/>
            <person name="Langer I."/>
            <person name="Beck A."/>
            <person name="Lehrach H."/>
            <person name="Reinhardt R."/>
            <person name="Pohl T.M."/>
            <person name="Eger P."/>
            <person name="Zimmermann W."/>
            <person name="Wedler H."/>
            <person name="Wambutt R."/>
            <person name="Purnelle B."/>
            <person name="Goffeau A."/>
            <person name="Cadieu E."/>
            <person name="Dreano S."/>
            <person name="Gloux S."/>
            <person name="Lelaure V."/>
            <person name="Mottier S."/>
            <person name="Galibert F."/>
            <person name="Aves S.J."/>
            <person name="Xiang Z."/>
            <person name="Hunt C."/>
            <person name="Moore K."/>
            <person name="Hurst S.M."/>
            <person name="Lucas M."/>
            <person name="Rochet M."/>
            <person name="Gaillardin C."/>
            <person name="Tallada V.A."/>
            <person name="Garzon A."/>
            <person name="Thode G."/>
            <person name="Daga R.R."/>
            <person name="Cruzado L."/>
            <person name="Jimenez J."/>
            <person name="Sanchez M."/>
            <person name="del Rey F."/>
            <person name="Benito J."/>
            <person name="Dominguez A."/>
            <person name="Revuelta J.L."/>
            <person name="Moreno S."/>
            <person name="Armstrong J."/>
            <person name="Forsburg S.L."/>
            <person name="Cerutti L."/>
            <person name="Lowe T."/>
            <person name="McCombie W.R."/>
            <person name="Paulsen I."/>
            <person name="Potashkin J."/>
            <person name="Shpakovski G.V."/>
            <person name="Ussery D."/>
            <person name="Barrell B.G."/>
            <person name="Nurse P."/>
        </authorList>
    </citation>
    <scope>NUCLEOTIDE SEQUENCE [LARGE SCALE GENOMIC DNA]</scope>
    <source>
        <strain>972 / ATCC 24843</strain>
    </source>
</reference>
<reference key="2">
    <citation type="journal article" date="2006" name="Nat. Biotechnol.">
        <title>ORFeome cloning and global analysis of protein localization in the fission yeast Schizosaccharomyces pombe.</title>
        <authorList>
            <person name="Matsuyama A."/>
            <person name="Arai R."/>
            <person name="Yashiroda Y."/>
            <person name="Shirai A."/>
            <person name="Kamata A."/>
            <person name="Sekido S."/>
            <person name="Kobayashi Y."/>
            <person name="Hashimoto A."/>
            <person name="Hamamoto M."/>
            <person name="Hiraoka Y."/>
            <person name="Horinouchi S."/>
            <person name="Yoshida M."/>
        </authorList>
    </citation>
    <scope>SUBCELLULAR LOCATION [LARGE SCALE ANALYSIS]</scope>
</reference>
<reference key="3">
    <citation type="journal article" date="2008" name="J. Proteome Res.">
        <title>Phosphoproteome analysis of fission yeast.</title>
        <authorList>
            <person name="Wilson-Grady J.T."/>
            <person name="Villen J."/>
            <person name="Gygi S.P."/>
        </authorList>
    </citation>
    <scope>PHOSPHORYLATION [LARGE SCALE ANALYSIS] AT SER-156</scope>
    <scope>IDENTIFICATION BY MASS SPECTROMETRY</scope>
</reference>
<name>RMP1_SCHPO</name>
<proteinExistence type="evidence at protein level"/>
<evidence type="ECO:0000250" key="1"/>
<evidence type="ECO:0000255" key="2"/>
<evidence type="ECO:0000256" key="3">
    <source>
        <dbReference type="SAM" id="MobiDB-lite"/>
    </source>
</evidence>
<evidence type="ECO:0000269" key="4">
    <source>
    </source>
</evidence>
<evidence type="ECO:0000269" key="5">
    <source>
    </source>
</evidence>
<evidence type="ECO:0000305" key="6"/>
<feature type="chain" id="PRO_0000372385" description="Ribonuclease MRP protein subunit rmp1">
    <location>
        <begin position="1"/>
        <end position="211"/>
    </location>
</feature>
<feature type="transmembrane region" description="Helical" evidence="2">
    <location>
        <begin position="73"/>
        <end position="93"/>
    </location>
</feature>
<feature type="region of interest" description="Disordered" evidence="3">
    <location>
        <begin position="178"/>
        <end position="211"/>
    </location>
</feature>
<feature type="compositionally biased region" description="Basic residues" evidence="3">
    <location>
        <begin position="181"/>
        <end position="201"/>
    </location>
</feature>
<feature type="modified residue" description="Phosphoserine" evidence="5">
    <location>
        <position position="156"/>
    </location>
</feature>
<sequence>MQELQYDVVLLQKIVYRNRNQHRLSVWWRHVRMLLRRLKQSLDGNEKAKIAILEQLPKSYFYFTNLIAHGQYPALGLVLLGILARVWFVMGGIEYEAKIQSEIVFSQKEQKKLELQSQDDIDTGTVVARDELLATEPISLSINPASTSYEKLTVSSPNSFLKNQDESLFLSSSPITVSQGTKRKSKNSNSTVKKKKKRARKGRDEIDDIFG</sequence>
<gene>
    <name type="ORF">SPAC323.08</name>
</gene>
<keyword id="KW-0472">Membrane</keyword>
<keyword id="KW-0539">Nucleus</keyword>
<keyword id="KW-0597">Phosphoprotein</keyword>
<keyword id="KW-1185">Reference proteome</keyword>
<keyword id="KW-0698">rRNA processing</keyword>
<keyword id="KW-0812">Transmembrane</keyword>
<keyword id="KW-1133">Transmembrane helix</keyword>
<organism>
    <name type="scientific">Schizosaccharomyces pombe (strain 972 / ATCC 24843)</name>
    <name type="common">Fission yeast</name>
    <dbReference type="NCBI Taxonomy" id="284812"/>
    <lineage>
        <taxon>Eukaryota</taxon>
        <taxon>Fungi</taxon>
        <taxon>Dikarya</taxon>
        <taxon>Ascomycota</taxon>
        <taxon>Taphrinomycotina</taxon>
        <taxon>Schizosaccharomycetes</taxon>
        <taxon>Schizosaccharomycetales</taxon>
        <taxon>Schizosaccharomycetaceae</taxon>
        <taxon>Schizosaccharomyces</taxon>
    </lineage>
</organism>
<dbReference type="EMBL" id="CU329670">
    <property type="protein sequence ID" value="CAB53411.1"/>
    <property type="molecule type" value="Genomic_DNA"/>
</dbReference>
<dbReference type="PIR" id="T38645">
    <property type="entry name" value="T38645"/>
</dbReference>
<dbReference type="SMR" id="Q9UT91"/>
<dbReference type="BioGRID" id="279521">
    <property type="interactions" value="11"/>
</dbReference>
<dbReference type="FunCoup" id="Q9UT91">
    <property type="interactions" value="71"/>
</dbReference>
<dbReference type="STRING" id="284812.Q9UT91"/>
<dbReference type="iPTMnet" id="Q9UT91"/>
<dbReference type="PaxDb" id="4896-SPAC323.08.1"/>
<dbReference type="EnsemblFungi" id="SPAC323.08.1">
    <property type="protein sequence ID" value="SPAC323.08.1:pep"/>
    <property type="gene ID" value="SPAC323.08"/>
</dbReference>
<dbReference type="KEGG" id="spo:2543088"/>
<dbReference type="PomBase" id="SPAC323.08"/>
<dbReference type="VEuPathDB" id="FungiDB:SPAC323.08"/>
<dbReference type="eggNOG" id="ENOG502S2QW">
    <property type="taxonomic scope" value="Eukaryota"/>
</dbReference>
<dbReference type="HOGENOM" id="CLU_031977_1_0_1"/>
<dbReference type="InParanoid" id="Q9UT91"/>
<dbReference type="OMA" id="VIPRCYI"/>
<dbReference type="PRO" id="PR:Q9UT91"/>
<dbReference type="Proteomes" id="UP000002485">
    <property type="component" value="Chromosome I"/>
</dbReference>
<dbReference type="GO" id="GO:0016020">
    <property type="term" value="C:membrane"/>
    <property type="evidence" value="ECO:0007669"/>
    <property type="project" value="UniProtKB-SubCell"/>
</dbReference>
<dbReference type="GO" id="GO:0005730">
    <property type="term" value="C:nucleolus"/>
    <property type="evidence" value="ECO:0007005"/>
    <property type="project" value="PomBase"/>
</dbReference>
<dbReference type="GO" id="GO:0005634">
    <property type="term" value="C:nucleus"/>
    <property type="evidence" value="ECO:0007005"/>
    <property type="project" value="PomBase"/>
</dbReference>
<dbReference type="GO" id="GO:0000172">
    <property type="term" value="C:ribonuclease MRP complex"/>
    <property type="evidence" value="ECO:0000269"/>
    <property type="project" value="PomBase"/>
</dbReference>
<dbReference type="GO" id="GO:0042134">
    <property type="term" value="F:rRNA primary transcript binding"/>
    <property type="evidence" value="ECO:0000318"/>
    <property type="project" value="GO_Central"/>
</dbReference>
<dbReference type="GO" id="GO:0000447">
    <property type="term" value="P:endonucleolytic cleavage in ITS1 to separate SSU-rRNA from 5.8S rRNA and LSU-rRNA from tricistronic rRNA transcript (SSU-rRNA, 5.8S rRNA, LSU-rRNA)"/>
    <property type="evidence" value="ECO:0000314"/>
    <property type="project" value="PomBase"/>
</dbReference>
<dbReference type="GO" id="GO:0000466">
    <property type="term" value="P:maturation of 5.8S rRNA from tricistronic rRNA transcript (SSU-rRNA, 5.8S rRNA, LSU-rRNA)"/>
    <property type="evidence" value="ECO:0000318"/>
    <property type="project" value="GO_Central"/>
</dbReference>
<dbReference type="GO" id="GO:0000294">
    <property type="term" value="P:nuclear-transcribed mRNA catabolic process, RNase MRP-dependent"/>
    <property type="evidence" value="ECO:0000318"/>
    <property type="project" value="GO_Central"/>
</dbReference>
<dbReference type="GO" id="GO:0008033">
    <property type="term" value="P:tRNA processing"/>
    <property type="evidence" value="ECO:0000314"/>
    <property type="project" value="PomBase"/>
</dbReference>
<dbReference type="CDD" id="cd22573">
    <property type="entry name" value="RMP1_RBD"/>
    <property type="match status" value="1"/>
</dbReference>
<dbReference type="InterPro" id="IPR047205">
    <property type="entry name" value="RMP1"/>
</dbReference>
<dbReference type="InterPro" id="IPR047204">
    <property type="entry name" value="RMP1_RBD"/>
</dbReference>
<dbReference type="PANTHER" id="PTHR37792">
    <property type="entry name" value="RIBONUCLEASE MRP PROTEIN SUBUNIT RMP1"/>
    <property type="match status" value="1"/>
</dbReference>
<dbReference type="PANTHER" id="PTHR37792:SF1">
    <property type="entry name" value="RIBONUCLEASE MRP PROTEIN SUBUNIT RMP1"/>
    <property type="match status" value="1"/>
</dbReference>
<dbReference type="Pfam" id="PF20945">
    <property type="entry name" value="RMP1"/>
    <property type="match status" value="2"/>
</dbReference>
<comment type="function">
    <text evidence="1">Functions as part of ribonuclease MRP (RNase MRP), which is involved in rRNA processing in mitochondria.</text>
</comment>
<comment type="subunit">
    <text evidence="1">Component of RNase MRP complex which consists of an RNA moiety and at least 10 protein subunits.</text>
</comment>
<comment type="subcellular location">
    <subcellularLocation>
        <location evidence="6">Membrane</location>
        <topology evidence="6">Single-pass membrane protein</topology>
    </subcellularLocation>
    <subcellularLocation>
        <location evidence="4">Nucleus</location>
        <location evidence="4">Nucleolus</location>
    </subcellularLocation>
</comment>